<feature type="chain" id="PRO_0000119492" description="Glutamate--tRNA ligase 1">
    <location>
        <begin position="1"/>
        <end position="441"/>
    </location>
</feature>
<feature type="short sequence motif" description="'HIGH' region" evidence="1">
    <location>
        <begin position="7"/>
        <end position="17"/>
    </location>
</feature>
<feature type="short sequence motif" description="'KMSKS' region" evidence="1">
    <location>
        <begin position="236"/>
        <end position="240"/>
    </location>
</feature>
<feature type="binding site" evidence="1">
    <location>
        <position position="239"/>
    </location>
    <ligand>
        <name>ATP</name>
        <dbReference type="ChEBI" id="CHEBI:30616"/>
    </ligand>
</feature>
<organism>
    <name type="scientific">Anaplasma marginale (strain St. Maries)</name>
    <dbReference type="NCBI Taxonomy" id="234826"/>
    <lineage>
        <taxon>Bacteria</taxon>
        <taxon>Pseudomonadati</taxon>
        <taxon>Pseudomonadota</taxon>
        <taxon>Alphaproteobacteria</taxon>
        <taxon>Rickettsiales</taxon>
        <taxon>Anaplasmataceae</taxon>
        <taxon>Anaplasma</taxon>
    </lineage>
</organism>
<name>SYE1_ANAMM</name>
<proteinExistence type="inferred from homology"/>
<reference key="1">
    <citation type="journal article" date="2005" name="Proc. Natl. Acad. Sci. U.S.A.">
        <title>Complete genome sequencing of Anaplasma marginale reveals that the surface is skewed to two superfamilies of outer membrane proteins.</title>
        <authorList>
            <person name="Brayton K.A."/>
            <person name="Kappmeyer L.S."/>
            <person name="Herndon D.R."/>
            <person name="Dark M.J."/>
            <person name="Tibbals D.L."/>
            <person name="Palmer G.H."/>
            <person name="McGuire T.C."/>
            <person name="Knowles D.P. Jr."/>
        </authorList>
    </citation>
    <scope>NUCLEOTIDE SEQUENCE [LARGE SCALE GENOMIC DNA]</scope>
    <source>
        <strain>St. Maries</strain>
    </source>
</reference>
<protein>
    <recommendedName>
        <fullName evidence="1">Glutamate--tRNA ligase 1</fullName>
        <ecNumber evidence="1">6.1.1.17</ecNumber>
    </recommendedName>
    <alternativeName>
        <fullName evidence="1">Glutamyl-tRNA synthetase 1</fullName>
        <shortName evidence="1">GluRS 1</shortName>
    </alternativeName>
</protein>
<accession>Q5PBW1</accession>
<sequence length="441" mass="50239">MITRFAPSPTGYMHIGNARTALICWLYARSRSGKLLLRIDDTDLERSENRYVEGIKNDLTWLAMDWDICFNQRSRISRYDEVFNSLMDAGAVYPCYETPEELELKRKMMLKMGLPPIYDRSALNMTEQDQKAYSGRKPYFRLKIGRDQAISWEDEIRGKVVFQAKNISDPILRRTDGSYTYMFPSTVDDIDFEVTHIVRGEDHVSNTAVQIYIMGLLGAKIPSFAHLPLLRMGGSKMSKRVGGTEIFKMRDMNLEPMAINSYMARIGTSLPVEPHTNMRSLVDSFDIKLFNQAPIKFELEDISKLNVRLLQKLPFAEVQDRLEACGIKCSEGFWYAVRDNINVISEVKGWAEICGPGVTPVVDDVNRQLLQLASDLLPEGEPNDGTWKTWLQKIKECSGCETRDILLPLRLALTGVPKGPEFAKLLPLIGRVEILRRLRGA</sequence>
<comment type="function">
    <text evidence="1">Catalyzes the attachment of glutamate to tRNA(Glu) in a two-step reaction: glutamate is first activated by ATP to form Glu-AMP and then transferred to the acceptor end of tRNA(Glu).</text>
</comment>
<comment type="catalytic activity">
    <reaction evidence="1">
        <text>tRNA(Glu) + L-glutamate + ATP = L-glutamyl-tRNA(Glu) + AMP + diphosphate</text>
        <dbReference type="Rhea" id="RHEA:23540"/>
        <dbReference type="Rhea" id="RHEA-COMP:9663"/>
        <dbReference type="Rhea" id="RHEA-COMP:9680"/>
        <dbReference type="ChEBI" id="CHEBI:29985"/>
        <dbReference type="ChEBI" id="CHEBI:30616"/>
        <dbReference type="ChEBI" id="CHEBI:33019"/>
        <dbReference type="ChEBI" id="CHEBI:78442"/>
        <dbReference type="ChEBI" id="CHEBI:78520"/>
        <dbReference type="ChEBI" id="CHEBI:456215"/>
        <dbReference type="EC" id="6.1.1.17"/>
    </reaction>
</comment>
<comment type="subunit">
    <text evidence="1">Monomer.</text>
</comment>
<comment type="subcellular location">
    <subcellularLocation>
        <location evidence="1">Cytoplasm</location>
    </subcellularLocation>
</comment>
<comment type="similarity">
    <text evidence="1">Belongs to the class-I aminoacyl-tRNA synthetase family. Glutamate--tRNA ligase type 1 subfamily.</text>
</comment>
<gene>
    <name evidence="1" type="primary">gltX1</name>
    <name type="ordered locus">AM039</name>
</gene>
<keyword id="KW-0030">Aminoacyl-tRNA synthetase</keyword>
<keyword id="KW-0067">ATP-binding</keyword>
<keyword id="KW-0963">Cytoplasm</keyword>
<keyword id="KW-0436">Ligase</keyword>
<keyword id="KW-0547">Nucleotide-binding</keyword>
<keyword id="KW-0648">Protein biosynthesis</keyword>
<evidence type="ECO:0000255" key="1">
    <source>
        <dbReference type="HAMAP-Rule" id="MF_00022"/>
    </source>
</evidence>
<dbReference type="EC" id="6.1.1.17" evidence="1"/>
<dbReference type="EMBL" id="CP000030">
    <property type="protein sequence ID" value="AAV86218.1"/>
    <property type="molecule type" value="Genomic_DNA"/>
</dbReference>
<dbReference type="RefSeq" id="WP_011114091.1">
    <property type="nucleotide sequence ID" value="NC_004842.2"/>
</dbReference>
<dbReference type="SMR" id="Q5PBW1"/>
<dbReference type="KEGG" id="ama:AM039"/>
<dbReference type="HOGENOM" id="CLU_015768_6_1_5"/>
<dbReference type="GO" id="GO:0005737">
    <property type="term" value="C:cytoplasm"/>
    <property type="evidence" value="ECO:0007669"/>
    <property type="project" value="UniProtKB-SubCell"/>
</dbReference>
<dbReference type="GO" id="GO:0005524">
    <property type="term" value="F:ATP binding"/>
    <property type="evidence" value="ECO:0007669"/>
    <property type="project" value="UniProtKB-UniRule"/>
</dbReference>
<dbReference type="GO" id="GO:0004818">
    <property type="term" value="F:glutamate-tRNA ligase activity"/>
    <property type="evidence" value="ECO:0007669"/>
    <property type="project" value="UniProtKB-UniRule"/>
</dbReference>
<dbReference type="GO" id="GO:0000049">
    <property type="term" value="F:tRNA binding"/>
    <property type="evidence" value="ECO:0007669"/>
    <property type="project" value="InterPro"/>
</dbReference>
<dbReference type="GO" id="GO:0006424">
    <property type="term" value="P:glutamyl-tRNA aminoacylation"/>
    <property type="evidence" value="ECO:0007669"/>
    <property type="project" value="UniProtKB-UniRule"/>
</dbReference>
<dbReference type="Gene3D" id="1.10.10.350">
    <property type="match status" value="1"/>
</dbReference>
<dbReference type="Gene3D" id="3.40.50.620">
    <property type="entry name" value="HUPs"/>
    <property type="match status" value="1"/>
</dbReference>
<dbReference type="HAMAP" id="MF_00022">
    <property type="entry name" value="Glu_tRNA_synth_type1"/>
    <property type="match status" value="1"/>
</dbReference>
<dbReference type="InterPro" id="IPR045462">
    <property type="entry name" value="aa-tRNA-synth_I_cd-bd"/>
</dbReference>
<dbReference type="InterPro" id="IPR020751">
    <property type="entry name" value="aa-tRNA-synth_I_codon-bd_sub2"/>
</dbReference>
<dbReference type="InterPro" id="IPR001412">
    <property type="entry name" value="aa-tRNA-synth_I_CS"/>
</dbReference>
<dbReference type="InterPro" id="IPR008925">
    <property type="entry name" value="aa_tRNA-synth_I_cd-bd_sf"/>
</dbReference>
<dbReference type="InterPro" id="IPR004527">
    <property type="entry name" value="Glu-tRNA-ligase_bac/mito"/>
</dbReference>
<dbReference type="InterPro" id="IPR000924">
    <property type="entry name" value="Glu/Gln-tRNA-synth"/>
</dbReference>
<dbReference type="InterPro" id="IPR020058">
    <property type="entry name" value="Glu/Gln-tRNA-synth_Ib_cat-dom"/>
</dbReference>
<dbReference type="InterPro" id="IPR049940">
    <property type="entry name" value="GluQ/Sye"/>
</dbReference>
<dbReference type="InterPro" id="IPR014729">
    <property type="entry name" value="Rossmann-like_a/b/a_fold"/>
</dbReference>
<dbReference type="NCBIfam" id="TIGR00464">
    <property type="entry name" value="gltX_bact"/>
    <property type="match status" value="1"/>
</dbReference>
<dbReference type="PANTHER" id="PTHR43311">
    <property type="entry name" value="GLUTAMATE--TRNA LIGASE"/>
    <property type="match status" value="1"/>
</dbReference>
<dbReference type="PANTHER" id="PTHR43311:SF2">
    <property type="entry name" value="GLUTAMATE--TRNA LIGASE, MITOCHONDRIAL-RELATED"/>
    <property type="match status" value="1"/>
</dbReference>
<dbReference type="Pfam" id="PF19269">
    <property type="entry name" value="Anticodon_2"/>
    <property type="match status" value="1"/>
</dbReference>
<dbReference type="Pfam" id="PF00749">
    <property type="entry name" value="tRNA-synt_1c"/>
    <property type="match status" value="1"/>
</dbReference>
<dbReference type="PRINTS" id="PR00987">
    <property type="entry name" value="TRNASYNTHGLU"/>
</dbReference>
<dbReference type="SUPFAM" id="SSF48163">
    <property type="entry name" value="An anticodon-binding domain of class I aminoacyl-tRNA synthetases"/>
    <property type="match status" value="1"/>
</dbReference>
<dbReference type="SUPFAM" id="SSF52374">
    <property type="entry name" value="Nucleotidylyl transferase"/>
    <property type="match status" value="1"/>
</dbReference>
<dbReference type="PROSITE" id="PS00178">
    <property type="entry name" value="AA_TRNA_LIGASE_I"/>
    <property type="match status" value="1"/>
</dbReference>